<evidence type="ECO:0000255" key="1">
    <source>
        <dbReference type="HAMAP-Rule" id="MF_00019"/>
    </source>
</evidence>
<sequence length="353" mass="37148">MPVKVRIALDAMGGDFGPSVIVPGAAISLGRHPDAEFLLFGDSALIEKELAAHPALKKVSRVIHTDVAVSMHDKPSQALRRGRKVSSMWLAIEAVKKGEADVAVSAGNTGALMAMARFCLRTLPGIDRPAIAATWPTVRGDSVVLDLGATIGGDAAHLKALAVMGAAMASVLFDLERPTVGLLNIGVEEIKGGEEIREAAELLRAMQSPRFEFVGFVEGDGIGKGAADVIVSEGFSGNIALKAAEGTARQISEYLKAAMSRTWRSKIGYLFARDAFKALKDKMDPNKSNGGVFLGLNGIVVKSHGGTSADGFAYAVDVGYDMVRYDLLTKINQTLNREAGALVSTPTAQEAVS</sequence>
<accession>Q2IWQ9</accession>
<gene>
    <name evidence="1" type="primary">plsX</name>
    <name type="ordered locus">RPB_2649</name>
</gene>
<proteinExistence type="inferred from homology"/>
<feature type="chain" id="PRO_1000001812" description="Phosphate acyltransferase">
    <location>
        <begin position="1"/>
        <end position="353"/>
    </location>
</feature>
<organism>
    <name type="scientific">Rhodopseudomonas palustris (strain HaA2)</name>
    <dbReference type="NCBI Taxonomy" id="316058"/>
    <lineage>
        <taxon>Bacteria</taxon>
        <taxon>Pseudomonadati</taxon>
        <taxon>Pseudomonadota</taxon>
        <taxon>Alphaproteobacteria</taxon>
        <taxon>Hyphomicrobiales</taxon>
        <taxon>Nitrobacteraceae</taxon>
        <taxon>Rhodopseudomonas</taxon>
    </lineage>
</organism>
<keyword id="KW-0963">Cytoplasm</keyword>
<keyword id="KW-0444">Lipid biosynthesis</keyword>
<keyword id="KW-0443">Lipid metabolism</keyword>
<keyword id="KW-0594">Phospholipid biosynthesis</keyword>
<keyword id="KW-1208">Phospholipid metabolism</keyword>
<keyword id="KW-1185">Reference proteome</keyword>
<keyword id="KW-0808">Transferase</keyword>
<dbReference type="EC" id="2.3.1.274" evidence="1"/>
<dbReference type="EMBL" id="CP000250">
    <property type="protein sequence ID" value="ABD07351.1"/>
    <property type="molecule type" value="Genomic_DNA"/>
</dbReference>
<dbReference type="RefSeq" id="WP_011441536.1">
    <property type="nucleotide sequence ID" value="NC_007778.1"/>
</dbReference>
<dbReference type="SMR" id="Q2IWQ9"/>
<dbReference type="STRING" id="316058.RPB_2649"/>
<dbReference type="KEGG" id="rpb:RPB_2649"/>
<dbReference type="eggNOG" id="COG0416">
    <property type="taxonomic scope" value="Bacteria"/>
</dbReference>
<dbReference type="HOGENOM" id="CLU_039379_1_0_5"/>
<dbReference type="OrthoDB" id="9806408at2"/>
<dbReference type="UniPathway" id="UPA00085"/>
<dbReference type="Proteomes" id="UP000008809">
    <property type="component" value="Chromosome"/>
</dbReference>
<dbReference type="GO" id="GO:0005737">
    <property type="term" value="C:cytoplasm"/>
    <property type="evidence" value="ECO:0007669"/>
    <property type="project" value="UniProtKB-SubCell"/>
</dbReference>
<dbReference type="GO" id="GO:0043811">
    <property type="term" value="F:phosphate:acyl-[acyl carrier protein] acyltransferase activity"/>
    <property type="evidence" value="ECO:0007669"/>
    <property type="project" value="UniProtKB-UniRule"/>
</dbReference>
<dbReference type="GO" id="GO:0006633">
    <property type="term" value="P:fatty acid biosynthetic process"/>
    <property type="evidence" value="ECO:0007669"/>
    <property type="project" value="UniProtKB-UniRule"/>
</dbReference>
<dbReference type="GO" id="GO:0008654">
    <property type="term" value="P:phospholipid biosynthetic process"/>
    <property type="evidence" value="ECO:0007669"/>
    <property type="project" value="UniProtKB-KW"/>
</dbReference>
<dbReference type="Gene3D" id="3.40.718.10">
    <property type="entry name" value="Isopropylmalate Dehydrogenase"/>
    <property type="match status" value="1"/>
</dbReference>
<dbReference type="HAMAP" id="MF_00019">
    <property type="entry name" value="PlsX"/>
    <property type="match status" value="1"/>
</dbReference>
<dbReference type="InterPro" id="IPR003664">
    <property type="entry name" value="FA_synthesis"/>
</dbReference>
<dbReference type="InterPro" id="IPR012281">
    <property type="entry name" value="Phospholipid_synth_PlsX-like"/>
</dbReference>
<dbReference type="NCBIfam" id="TIGR00182">
    <property type="entry name" value="plsX"/>
    <property type="match status" value="1"/>
</dbReference>
<dbReference type="PANTHER" id="PTHR30100">
    <property type="entry name" value="FATTY ACID/PHOSPHOLIPID SYNTHESIS PROTEIN PLSX"/>
    <property type="match status" value="1"/>
</dbReference>
<dbReference type="PANTHER" id="PTHR30100:SF1">
    <property type="entry name" value="PHOSPHATE ACYLTRANSFERASE"/>
    <property type="match status" value="1"/>
</dbReference>
<dbReference type="Pfam" id="PF02504">
    <property type="entry name" value="FA_synthesis"/>
    <property type="match status" value="1"/>
</dbReference>
<dbReference type="PIRSF" id="PIRSF002465">
    <property type="entry name" value="Phsphlp_syn_PlsX"/>
    <property type="match status" value="1"/>
</dbReference>
<dbReference type="SUPFAM" id="SSF53659">
    <property type="entry name" value="Isocitrate/Isopropylmalate dehydrogenase-like"/>
    <property type="match status" value="1"/>
</dbReference>
<name>PLSX_RHOP2</name>
<comment type="function">
    <text evidence="1">Catalyzes the reversible formation of acyl-phosphate (acyl-PO(4)) from acyl-[acyl-carrier-protein] (acyl-ACP). This enzyme utilizes acyl-ACP as fatty acyl donor, but not acyl-CoA.</text>
</comment>
<comment type="catalytic activity">
    <reaction evidence="1">
        <text>a fatty acyl-[ACP] + phosphate = an acyl phosphate + holo-[ACP]</text>
        <dbReference type="Rhea" id="RHEA:42292"/>
        <dbReference type="Rhea" id="RHEA-COMP:9685"/>
        <dbReference type="Rhea" id="RHEA-COMP:14125"/>
        <dbReference type="ChEBI" id="CHEBI:43474"/>
        <dbReference type="ChEBI" id="CHEBI:59918"/>
        <dbReference type="ChEBI" id="CHEBI:64479"/>
        <dbReference type="ChEBI" id="CHEBI:138651"/>
        <dbReference type="EC" id="2.3.1.274"/>
    </reaction>
</comment>
<comment type="pathway">
    <text evidence="1">Lipid metabolism; phospholipid metabolism.</text>
</comment>
<comment type="subunit">
    <text evidence="1">Homodimer. Probably interacts with PlsY.</text>
</comment>
<comment type="subcellular location">
    <subcellularLocation>
        <location evidence="1">Cytoplasm</location>
    </subcellularLocation>
    <text evidence="1">Associated with the membrane possibly through PlsY.</text>
</comment>
<comment type="similarity">
    <text evidence="1">Belongs to the PlsX family.</text>
</comment>
<protein>
    <recommendedName>
        <fullName evidence="1">Phosphate acyltransferase</fullName>
        <ecNumber evidence="1">2.3.1.274</ecNumber>
    </recommendedName>
    <alternativeName>
        <fullName evidence="1">Acyl-ACP phosphotransacylase</fullName>
    </alternativeName>
    <alternativeName>
        <fullName evidence="1">Acyl-[acyl-carrier-protein]--phosphate acyltransferase</fullName>
    </alternativeName>
    <alternativeName>
        <fullName evidence="1">Phosphate-acyl-ACP acyltransferase</fullName>
    </alternativeName>
</protein>
<reference key="1">
    <citation type="submission" date="2006-01" db="EMBL/GenBank/DDBJ databases">
        <title>Complete sequence of Rhodopseudomonas palustris HaA2.</title>
        <authorList>
            <consortium name="US DOE Joint Genome Institute"/>
            <person name="Copeland A."/>
            <person name="Lucas S."/>
            <person name="Lapidus A."/>
            <person name="Barry K."/>
            <person name="Detter J.C."/>
            <person name="Glavina T."/>
            <person name="Hammon N."/>
            <person name="Israni S."/>
            <person name="Pitluck S."/>
            <person name="Chain P."/>
            <person name="Malfatti S."/>
            <person name="Shin M."/>
            <person name="Vergez L."/>
            <person name="Schmutz J."/>
            <person name="Larimer F."/>
            <person name="Land M."/>
            <person name="Hauser L."/>
            <person name="Pelletier D.A."/>
            <person name="Kyrpides N."/>
            <person name="Anderson I."/>
            <person name="Oda Y."/>
            <person name="Harwood C.S."/>
            <person name="Richardson P."/>
        </authorList>
    </citation>
    <scope>NUCLEOTIDE SEQUENCE [LARGE SCALE GENOMIC DNA]</scope>
    <source>
        <strain>HaA2</strain>
    </source>
</reference>